<sequence length="348" mass="36859">MAAVPDRERALDLALAQIDKQFGKGSVMRLGERPVVQTAVVPTGSIALDVALGVGGLPRGRVIEVYGPESSGKTTVALHAVANAQRAGGIAAFVDAEHALDPEYARALGVDTDALLVSQPDTGEQALEIADMLVRSGALDIIIIDSVAALVPRAEIEGEMGDSHVGLQARLMSQALRKMTGVLSNTGTTAIFINQLREKIGVMFGSPETTTGGRALKFYASVRLDVRRIESLKDGTDVVGNRTRVKVVKNKVAAPFKQAEFDIMYGKGISREGSLIDVGVEQAIIRKSGAWYTYEGDQLGQGKEKAREFLRENPDVAAEIEKKILEKLGVGAGAGDATGGPELPPVDF</sequence>
<gene>
    <name evidence="1" type="primary">recA</name>
    <name type="ordered locus">Sare_1389</name>
</gene>
<organism>
    <name type="scientific">Salinispora arenicola (strain CNS-205)</name>
    <dbReference type="NCBI Taxonomy" id="391037"/>
    <lineage>
        <taxon>Bacteria</taxon>
        <taxon>Bacillati</taxon>
        <taxon>Actinomycetota</taxon>
        <taxon>Actinomycetes</taxon>
        <taxon>Micromonosporales</taxon>
        <taxon>Micromonosporaceae</taxon>
        <taxon>Salinispora</taxon>
    </lineage>
</organism>
<accession>A8M7V5</accession>
<proteinExistence type="inferred from homology"/>
<reference key="1">
    <citation type="submission" date="2007-10" db="EMBL/GenBank/DDBJ databases">
        <title>Complete sequence of Salinispora arenicola CNS-205.</title>
        <authorList>
            <consortium name="US DOE Joint Genome Institute"/>
            <person name="Copeland A."/>
            <person name="Lucas S."/>
            <person name="Lapidus A."/>
            <person name="Barry K."/>
            <person name="Glavina del Rio T."/>
            <person name="Dalin E."/>
            <person name="Tice H."/>
            <person name="Pitluck S."/>
            <person name="Foster B."/>
            <person name="Schmutz J."/>
            <person name="Larimer F."/>
            <person name="Land M."/>
            <person name="Hauser L."/>
            <person name="Kyrpides N."/>
            <person name="Ivanova N."/>
            <person name="Jensen P.R."/>
            <person name="Moore B.S."/>
            <person name="Penn K."/>
            <person name="Jenkins C."/>
            <person name="Udwary D."/>
            <person name="Xiang L."/>
            <person name="Gontang E."/>
            <person name="Richardson P."/>
        </authorList>
    </citation>
    <scope>NUCLEOTIDE SEQUENCE [LARGE SCALE GENOMIC DNA]</scope>
    <source>
        <strain>CNS-205</strain>
    </source>
</reference>
<protein>
    <recommendedName>
        <fullName evidence="1">Protein RecA</fullName>
    </recommendedName>
    <alternativeName>
        <fullName evidence="1">Recombinase A</fullName>
    </alternativeName>
</protein>
<name>RECA_SALAI</name>
<feature type="chain" id="PRO_1000078677" description="Protein RecA">
    <location>
        <begin position="1"/>
        <end position="348"/>
    </location>
</feature>
<feature type="binding site" evidence="1">
    <location>
        <begin position="67"/>
        <end position="74"/>
    </location>
    <ligand>
        <name>ATP</name>
        <dbReference type="ChEBI" id="CHEBI:30616"/>
    </ligand>
</feature>
<dbReference type="EMBL" id="CP000850">
    <property type="protein sequence ID" value="ABV97289.1"/>
    <property type="molecule type" value="Genomic_DNA"/>
</dbReference>
<dbReference type="SMR" id="A8M7V5"/>
<dbReference type="STRING" id="391037.Sare_1389"/>
<dbReference type="KEGG" id="saq:Sare_1389"/>
<dbReference type="PATRIC" id="fig|391037.6.peg.1413"/>
<dbReference type="eggNOG" id="COG0468">
    <property type="taxonomic scope" value="Bacteria"/>
</dbReference>
<dbReference type="HOGENOM" id="CLU_040469_3_2_11"/>
<dbReference type="OrthoDB" id="9776733at2"/>
<dbReference type="GO" id="GO:0005829">
    <property type="term" value="C:cytosol"/>
    <property type="evidence" value="ECO:0007669"/>
    <property type="project" value="TreeGrafter"/>
</dbReference>
<dbReference type="GO" id="GO:0005524">
    <property type="term" value="F:ATP binding"/>
    <property type="evidence" value="ECO:0007669"/>
    <property type="project" value="UniProtKB-UniRule"/>
</dbReference>
<dbReference type="GO" id="GO:0016887">
    <property type="term" value="F:ATP hydrolysis activity"/>
    <property type="evidence" value="ECO:0007669"/>
    <property type="project" value="InterPro"/>
</dbReference>
<dbReference type="GO" id="GO:0140664">
    <property type="term" value="F:ATP-dependent DNA damage sensor activity"/>
    <property type="evidence" value="ECO:0007669"/>
    <property type="project" value="InterPro"/>
</dbReference>
<dbReference type="GO" id="GO:0003684">
    <property type="term" value="F:damaged DNA binding"/>
    <property type="evidence" value="ECO:0007669"/>
    <property type="project" value="UniProtKB-UniRule"/>
</dbReference>
<dbReference type="GO" id="GO:0003697">
    <property type="term" value="F:single-stranded DNA binding"/>
    <property type="evidence" value="ECO:0007669"/>
    <property type="project" value="UniProtKB-UniRule"/>
</dbReference>
<dbReference type="GO" id="GO:0006310">
    <property type="term" value="P:DNA recombination"/>
    <property type="evidence" value="ECO:0007669"/>
    <property type="project" value="UniProtKB-UniRule"/>
</dbReference>
<dbReference type="GO" id="GO:0006281">
    <property type="term" value="P:DNA repair"/>
    <property type="evidence" value="ECO:0007669"/>
    <property type="project" value="UniProtKB-UniRule"/>
</dbReference>
<dbReference type="GO" id="GO:0009432">
    <property type="term" value="P:SOS response"/>
    <property type="evidence" value="ECO:0007669"/>
    <property type="project" value="UniProtKB-UniRule"/>
</dbReference>
<dbReference type="CDD" id="cd00983">
    <property type="entry name" value="RecA"/>
    <property type="match status" value="1"/>
</dbReference>
<dbReference type="FunFam" id="3.40.50.300:FF:000087">
    <property type="entry name" value="Recombinase RecA"/>
    <property type="match status" value="1"/>
</dbReference>
<dbReference type="Gene3D" id="3.40.50.300">
    <property type="entry name" value="P-loop containing nucleotide triphosphate hydrolases"/>
    <property type="match status" value="1"/>
</dbReference>
<dbReference type="HAMAP" id="MF_00268">
    <property type="entry name" value="RecA"/>
    <property type="match status" value="1"/>
</dbReference>
<dbReference type="InterPro" id="IPR003593">
    <property type="entry name" value="AAA+_ATPase"/>
</dbReference>
<dbReference type="InterPro" id="IPR013765">
    <property type="entry name" value="DNA_recomb/repair_RecA"/>
</dbReference>
<dbReference type="InterPro" id="IPR020584">
    <property type="entry name" value="DNA_recomb/repair_RecA_CS"/>
</dbReference>
<dbReference type="InterPro" id="IPR027417">
    <property type="entry name" value="P-loop_NTPase"/>
</dbReference>
<dbReference type="InterPro" id="IPR049261">
    <property type="entry name" value="RecA-like_C"/>
</dbReference>
<dbReference type="InterPro" id="IPR049428">
    <property type="entry name" value="RecA-like_N"/>
</dbReference>
<dbReference type="InterPro" id="IPR020588">
    <property type="entry name" value="RecA_ATP-bd"/>
</dbReference>
<dbReference type="InterPro" id="IPR023400">
    <property type="entry name" value="RecA_C_sf"/>
</dbReference>
<dbReference type="InterPro" id="IPR020587">
    <property type="entry name" value="RecA_monomer-monomer_interface"/>
</dbReference>
<dbReference type="NCBIfam" id="TIGR02012">
    <property type="entry name" value="tigrfam_recA"/>
    <property type="match status" value="1"/>
</dbReference>
<dbReference type="PANTHER" id="PTHR45900:SF1">
    <property type="entry name" value="MITOCHONDRIAL DNA REPAIR PROTEIN RECA HOMOLOG-RELATED"/>
    <property type="match status" value="1"/>
</dbReference>
<dbReference type="PANTHER" id="PTHR45900">
    <property type="entry name" value="RECA"/>
    <property type="match status" value="1"/>
</dbReference>
<dbReference type="Pfam" id="PF00154">
    <property type="entry name" value="RecA"/>
    <property type="match status" value="1"/>
</dbReference>
<dbReference type="Pfam" id="PF21096">
    <property type="entry name" value="RecA_C"/>
    <property type="match status" value="1"/>
</dbReference>
<dbReference type="PRINTS" id="PR00142">
    <property type="entry name" value="RECA"/>
</dbReference>
<dbReference type="SMART" id="SM00382">
    <property type="entry name" value="AAA"/>
    <property type="match status" value="1"/>
</dbReference>
<dbReference type="SUPFAM" id="SSF52540">
    <property type="entry name" value="P-loop containing nucleoside triphosphate hydrolases"/>
    <property type="match status" value="1"/>
</dbReference>
<dbReference type="SUPFAM" id="SSF54752">
    <property type="entry name" value="RecA protein, C-terminal domain"/>
    <property type="match status" value="1"/>
</dbReference>
<dbReference type="PROSITE" id="PS00321">
    <property type="entry name" value="RECA_1"/>
    <property type="match status" value="1"/>
</dbReference>
<dbReference type="PROSITE" id="PS50162">
    <property type="entry name" value="RECA_2"/>
    <property type="match status" value="1"/>
</dbReference>
<dbReference type="PROSITE" id="PS50163">
    <property type="entry name" value="RECA_3"/>
    <property type="match status" value="1"/>
</dbReference>
<keyword id="KW-0067">ATP-binding</keyword>
<keyword id="KW-0963">Cytoplasm</keyword>
<keyword id="KW-0227">DNA damage</keyword>
<keyword id="KW-0233">DNA recombination</keyword>
<keyword id="KW-0234">DNA repair</keyword>
<keyword id="KW-0238">DNA-binding</keyword>
<keyword id="KW-0547">Nucleotide-binding</keyword>
<keyword id="KW-0742">SOS response</keyword>
<comment type="function">
    <text evidence="1">Can catalyze the hydrolysis of ATP in the presence of single-stranded DNA, the ATP-dependent uptake of single-stranded DNA by duplex DNA, and the ATP-dependent hybridization of homologous single-stranded DNAs. It interacts with LexA causing its activation and leading to its autocatalytic cleavage.</text>
</comment>
<comment type="subcellular location">
    <subcellularLocation>
        <location evidence="1">Cytoplasm</location>
    </subcellularLocation>
</comment>
<comment type="similarity">
    <text evidence="1">Belongs to the RecA family.</text>
</comment>
<evidence type="ECO:0000255" key="1">
    <source>
        <dbReference type="HAMAP-Rule" id="MF_00268"/>
    </source>
</evidence>